<protein>
    <recommendedName>
        <fullName evidence="1">Atrochrysone carboxyl ACP thioesterase</fullName>
        <shortName evidence="1">ACTE</shortName>
        <ecNumber evidence="1">3.1.2.-</ecNumber>
    </recommendedName>
    <alternativeName>
        <fullName evidence="8">Endocrocin synthesis protein B</fullName>
    </alternativeName>
</protein>
<name>ENCB_ASPFU</name>
<feature type="chain" id="PRO_0000437053" description="Atrochrysone carboxyl ACP thioesterase">
    <location>
        <begin position="1"/>
        <end position="315"/>
    </location>
</feature>
<feature type="active site" description="Proton donor/acceptor" evidence="3">
    <location>
        <position position="99"/>
    </location>
</feature>
<feature type="binding site" evidence="2">
    <location>
        <position position="95"/>
    </location>
    <ligand>
        <name>Zn(2+)</name>
        <dbReference type="ChEBI" id="CHEBI:29105"/>
        <label>1</label>
        <note>catalytic</note>
    </ligand>
</feature>
<feature type="binding site" evidence="2">
    <location>
        <position position="97"/>
    </location>
    <ligand>
        <name>Zn(2+)</name>
        <dbReference type="ChEBI" id="CHEBI:29105"/>
        <label>1</label>
        <note>catalytic</note>
    </ligand>
</feature>
<feature type="binding site" evidence="2">
    <location>
        <position position="99"/>
    </location>
    <ligand>
        <name>Zn(2+)</name>
        <dbReference type="ChEBI" id="CHEBI:29105"/>
        <label>2</label>
        <note>catalytic</note>
    </ligand>
</feature>
<feature type="binding site" evidence="2">
    <location>
        <position position="100"/>
    </location>
    <ligand>
        <name>Zn(2+)</name>
        <dbReference type="ChEBI" id="CHEBI:29105"/>
        <label>2</label>
        <note>catalytic</note>
    </ligand>
</feature>
<evidence type="ECO:0000250" key="1">
    <source>
        <dbReference type="UniProtKB" id="Q0CCY4"/>
    </source>
</evidence>
<evidence type="ECO:0000250" key="2">
    <source>
        <dbReference type="UniProtKB" id="Q988B9"/>
    </source>
</evidence>
<evidence type="ECO:0000255" key="3"/>
<evidence type="ECO:0000269" key="4">
    <source>
    </source>
</evidence>
<evidence type="ECO:0000269" key="5">
    <source>
    </source>
</evidence>
<evidence type="ECO:0000269" key="6">
    <source>
    </source>
</evidence>
<evidence type="ECO:0000269" key="7">
    <source>
    </source>
</evidence>
<evidence type="ECO:0000303" key="8">
    <source>
    </source>
</evidence>
<evidence type="ECO:0000305" key="9"/>
<evidence type="ECO:0000305" key="10">
    <source>
    </source>
</evidence>
<organism>
    <name type="scientific">Aspergillus fumigatus (strain ATCC MYA-4609 / CBS 101355 / FGSC A1100 / Af293)</name>
    <name type="common">Neosartorya fumigata</name>
    <dbReference type="NCBI Taxonomy" id="330879"/>
    <lineage>
        <taxon>Eukaryota</taxon>
        <taxon>Fungi</taxon>
        <taxon>Dikarya</taxon>
        <taxon>Ascomycota</taxon>
        <taxon>Pezizomycotina</taxon>
        <taxon>Eurotiomycetes</taxon>
        <taxon>Eurotiomycetidae</taxon>
        <taxon>Eurotiales</taxon>
        <taxon>Aspergillaceae</taxon>
        <taxon>Aspergillus</taxon>
        <taxon>Aspergillus subgen. Fumigati</taxon>
    </lineage>
</organism>
<gene>
    <name evidence="8" type="primary">encB</name>
    <name type="ORF">AFUA_4G00220</name>
</gene>
<reference key="1">
    <citation type="journal article" date="2005" name="Nature">
        <title>Genomic sequence of the pathogenic and allergenic filamentous fungus Aspergillus fumigatus.</title>
        <authorList>
            <person name="Nierman W.C."/>
            <person name="Pain A."/>
            <person name="Anderson M.J."/>
            <person name="Wortman J.R."/>
            <person name="Kim H.S."/>
            <person name="Arroyo J."/>
            <person name="Berriman M."/>
            <person name="Abe K."/>
            <person name="Archer D.B."/>
            <person name="Bermejo C."/>
            <person name="Bennett J.W."/>
            <person name="Bowyer P."/>
            <person name="Chen D."/>
            <person name="Collins M."/>
            <person name="Coulsen R."/>
            <person name="Davies R."/>
            <person name="Dyer P.S."/>
            <person name="Farman M.L."/>
            <person name="Fedorova N."/>
            <person name="Fedorova N.D."/>
            <person name="Feldblyum T.V."/>
            <person name="Fischer R."/>
            <person name="Fosker N."/>
            <person name="Fraser A."/>
            <person name="Garcia J.L."/>
            <person name="Garcia M.J."/>
            <person name="Goble A."/>
            <person name="Goldman G.H."/>
            <person name="Gomi K."/>
            <person name="Griffith-Jones S."/>
            <person name="Gwilliam R."/>
            <person name="Haas B.J."/>
            <person name="Haas H."/>
            <person name="Harris D.E."/>
            <person name="Horiuchi H."/>
            <person name="Huang J."/>
            <person name="Humphray S."/>
            <person name="Jimenez J."/>
            <person name="Keller N."/>
            <person name="Khouri H."/>
            <person name="Kitamoto K."/>
            <person name="Kobayashi T."/>
            <person name="Konzack S."/>
            <person name="Kulkarni R."/>
            <person name="Kumagai T."/>
            <person name="Lafton A."/>
            <person name="Latge J.-P."/>
            <person name="Li W."/>
            <person name="Lord A."/>
            <person name="Lu C."/>
            <person name="Majoros W.H."/>
            <person name="May G.S."/>
            <person name="Miller B.L."/>
            <person name="Mohamoud Y."/>
            <person name="Molina M."/>
            <person name="Monod M."/>
            <person name="Mouyna I."/>
            <person name="Mulligan S."/>
            <person name="Murphy L.D."/>
            <person name="O'Neil S."/>
            <person name="Paulsen I."/>
            <person name="Penalva M.A."/>
            <person name="Pertea M."/>
            <person name="Price C."/>
            <person name="Pritchard B.L."/>
            <person name="Quail M.A."/>
            <person name="Rabbinowitsch E."/>
            <person name="Rawlins N."/>
            <person name="Rajandream M.A."/>
            <person name="Reichard U."/>
            <person name="Renauld H."/>
            <person name="Robson G.D."/>
            <person name="Rodriguez de Cordoba S."/>
            <person name="Rodriguez-Pena J.M."/>
            <person name="Ronning C.M."/>
            <person name="Rutter S."/>
            <person name="Salzberg S.L."/>
            <person name="Sanchez M."/>
            <person name="Sanchez-Ferrero J.C."/>
            <person name="Saunders D."/>
            <person name="Seeger K."/>
            <person name="Squares R."/>
            <person name="Squares S."/>
            <person name="Takeuchi M."/>
            <person name="Tekaia F."/>
            <person name="Turner G."/>
            <person name="Vazquez de Aldana C.R."/>
            <person name="Weidman J."/>
            <person name="White O."/>
            <person name="Woodward J.R."/>
            <person name="Yu J.-H."/>
            <person name="Fraser C.M."/>
            <person name="Galagan J.E."/>
            <person name="Asai K."/>
            <person name="Machida M."/>
            <person name="Hall N."/>
            <person name="Barrell B.G."/>
            <person name="Denning D.W."/>
        </authorList>
    </citation>
    <scope>NUCLEOTIDE SEQUENCE [LARGE SCALE GENOMIC DNA]</scope>
    <source>
        <strain>ATCC MYA-4609 / CBS 101355 / FGSC A1100 / Af293</strain>
    </source>
</reference>
<reference key="2">
    <citation type="journal article" date="2010" name="Planta Med.">
        <title>Anti-inflammatory, cyclooxygenase (COX)-2, COX-1 inhibitory, and free radical scavenging effects of Rumex nepalensis.</title>
        <authorList>
            <person name="Gautam R."/>
            <person name="Karkhile K.V."/>
            <person name="Bhutani K.K."/>
            <person name="Jachak S.M."/>
        </authorList>
    </citation>
    <scope>BIOTECHNOLOGY</scope>
</reference>
<reference key="3">
    <citation type="journal article" date="2012" name="Appl. Environ. Microbiol.">
        <title>Genome-based cluster deletion reveals an endocrocin biosynthetic pathway in Aspergillus fumigatus.</title>
        <authorList>
            <person name="Lim F.Y."/>
            <person name="Hou Y."/>
            <person name="Chen Y."/>
            <person name="Oh J.H."/>
            <person name="Lee I."/>
            <person name="Bugni T.S."/>
            <person name="Keller N.P."/>
        </authorList>
    </citation>
    <scope>FUNCTION</scope>
    <scope>DISRUPTION PHENOTYPE</scope>
</reference>
<reference key="4">
    <citation type="journal article" date="2013" name="PLoS Pathog.">
        <title>Low-volume toolbox for the discovery of immunosuppressive fungal secondary metabolites.</title>
        <authorList>
            <person name="Berthier E."/>
            <person name="Lim F.Y."/>
            <person name="Deng Q."/>
            <person name="Guo C.J."/>
            <person name="Kontoyiannis D.P."/>
            <person name="Wang C.C."/>
            <person name="Rindy J."/>
            <person name="Beebe D.J."/>
            <person name="Huttenlocher A."/>
            <person name="Keller N.P."/>
        </authorList>
    </citation>
    <scope>FUNCTION</scope>
    <scope>TISSUE SPECIFICITY</scope>
</reference>
<reference key="5">
    <citation type="journal article" date="2016" name="Environ. Microbiol.">
        <title>Redundant synthesis of a conidial polyketide by two distinct secondary metabolite clusters in Aspergillus fumigatus.</title>
        <authorList>
            <person name="Throckmorton K."/>
            <person name="Lim F.Y."/>
            <person name="Kontoyiannis D.P."/>
            <person name="Zheng W."/>
            <person name="Keller N.P."/>
        </authorList>
    </citation>
    <scope>INDUCTION</scope>
</reference>
<sequence length="315" mass="35346">MDQYSNLFAFEDYLGAQARSIPDLPEVDVLSPRVVRVLGGNPGQMQLQGTNTYILGTGAERLLIDSGQGRARWEQLMASLAAEHKFRISTVLLTHWHLDHTGGVPHLFRIFPELRGANAIYKYHPDPSQQAIVDGQVFSVEGATVRAVFTPGHSTDHMCFLLQEEEAIFTGDTVLGHGTTGVEDLEEYMQSLRKIQSLGCRIGYPGHGAVIENMQQKVQQEIDRKQRRERQVLLALQNIQREKRTVGDANGAATQAELIEAIFGRLPADVADRFFAPYMKDILMKMARDKQVGFRFKGGQKHWFANVSQENPVCR</sequence>
<dbReference type="EC" id="3.1.2.-" evidence="1"/>
<dbReference type="EMBL" id="AAHF01000017">
    <property type="protein sequence ID" value="EAL84396.1"/>
    <property type="molecule type" value="Genomic_DNA"/>
</dbReference>
<dbReference type="RefSeq" id="XP_746434.1">
    <property type="nucleotide sequence ID" value="XM_741341.1"/>
</dbReference>
<dbReference type="SMR" id="Q4W945"/>
<dbReference type="STRING" id="330879.Q4W945"/>
<dbReference type="EnsemblFungi" id="EAL84396">
    <property type="protein sequence ID" value="EAL84396"/>
    <property type="gene ID" value="AFUA_4G00220"/>
</dbReference>
<dbReference type="GeneID" id="3503738"/>
<dbReference type="KEGG" id="afm:AFUA_4G00220"/>
<dbReference type="VEuPathDB" id="FungiDB:Afu4g00220"/>
<dbReference type="eggNOG" id="KOG0813">
    <property type="taxonomic scope" value="Eukaryota"/>
</dbReference>
<dbReference type="HOGENOM" id="CLU_048478_1_0_1"/>
<dbReference type="InParanoid" id="Q4W945"/>
<dbReference type="OMA" id="KHWFANV"/>
<dbReference type="OrthoDB" id="17458at2759"/>
<dbReference type="Proteomes" id="UP000002530">
    <property type="component" value="Chromosome 4"/>
</dbReference>
<dbReference type="GO" id="GO:0016787">
    <property type="term" value="F:hydrolase activity"/>
    <property type="evidence" value="ECO:0007669"/>
    <property type="project" value="UniProtKB-KW"/>
</dbReference>
<dbReference type="GO" id="GO:0046872">
    <property type="term" value="F:metal ion binding"/>
    <property type="evidence" value="ECO:0007669"/>
    <property type="project" value="UniProtKB-KW"/>
</dbReference>
<dbReference type="GO" id="GO:1900602">
    <property type="term" value="P:endocrocin biosynthetic process"/>
    <property type="evidence" value="ECO:0000315"/>
    <property type="project" value="AspGD"/>
</dbReference>
<dbReference type="GO" id="GO:0044550">
    <property type="term" value="P:secondary metabolite biosynthetic process"/>
    <property type="evidence" value="ECO:0000318"/>
    <property type="project" value="GO_Central"/>
</dbReference>
<dbReference type="CDD" id="cd07722">
    <property type="entry name" value="LACTB2-like_MBL-fold"/>
    <property type="match status" value="1"/>
</dbReference>
<dbReference type="FunFam" id="3.60.15.10:FF:000041">
    <property type="entry name" value="Metallo-beta-lactamase domain protein"/>
    <property type="match status" value="1"/>
</dbReference>
<dbReference type="Gene3D" id="3.60.15.10">
    <property type="entry name" value="Ribonuclease Z/Hydroxyacylglutathione hydrolase-like"/>
    <property type="match status" value="1"/>
</dbReference>
<dbReference type="Gene3D" id="1.10.10.10">
    <property type="entry name" value="Winged helix-like DNA-binding domain superfamily/Winged helix DNA-binding domain"/>
    <property type="match status" value="1"/>
</dbReference>
<dbReference type="InterPro" id="IPR047921">
    <property type="entry name" value="LACTB2-like_MBL-fold"/>
</dbReference>
<dbReference type="InterPro" id="IPR001279">
    <property type="entry name" value="Metallo-B-lactamas"/>
</dbReference>
<dbReference type="InterPro" id="IPR036866">
    <property type="entry name" value="RibonucZ/Hydroxyglut_hydro"/>
</dbReference>
<dbReference type="InterPro" id="IPR050662">
    <property type="entry name" value="Sec-metab_biosynth-thioest"/>
</dbReference>
<dbReference type="InterPro" id="IPR036388">
    <property type="entry name" value="WH-like_DNA-bd_sf"/>
</dbReference>
<dbReference type="PANTHER" id="PTHR23131:SF3">
    <property type="entry name" value="ATROCHRYSONE CARBOXYL ACP THIOESTERASE"/>
    <property type="match status" value="1"/>
</dbReference>
<dbReference type="PANTHER" id="PTHR23131">
    <property type="entry name" value="ENDORIBONUCLEASE LACTB2"/>
    <property type="match status" value="1"/>
</dbReference>
<dbReference type="Pfam" id="PF00753">
    <property type="entry name" value="Lactamase_B"/>
    <property type="match status" value="1"/>
</dbReference>
<dbReference type="SMART" id="SM00849">
    <property type="entry name" value="Lactamase_B"/>
    <property type="match status" value="1"/>
</dbReference>
<dbReference type="SUPFAM" id="SSF56281">
    <property type="entry name" value="Metallo-hydrolase/oxidoreductase"/>
    <property type="match status" value="1"/>
</dbReference>
<accession>Q4W945</accession>
<proteinExistence type="evidence at protein level"/>
<keyword id="KW-0378">Hydrolase</keyword>
<keyword id="KW-0479">Metal-binding</keyword>
<keyword id="KW-1185">Reference proteome</keyword>
<keyword id="KW-0862">Zinc</keyword>
<comment type="function">
    <text evidence="5 6">Atrochrysone carboxyl ACP thioesterase; part of the gene cluster that mediates the biosynthesis of endocrocin, a simple anthraquinone interesting for many biotechnological applications (PubMed:22492455, PubMed:23592999). The pathway begins with the synthesis of atrochrysone thioester by the polyketide synthase (PKS) encA (PubMed:22492455). The atrochrysone carboxyl ACP thioesterase encB then breaks the thioester bond and releases the atrochrysone carboxylic acid from encA (PubMed:22492455). The atrochrysone carboxylic acid is then converted to endocrocin anthrone which is further oxidized into endocrocin by the anthrone oxygenase encC (PubMed:22492455). The exact function of encD has not been identified yet, but it negatively regulates endocrocin production, likely through the modification of endocrocin itself (PubMed:22492455).</text>
</comment>
<comment type="catalytic activity">
    <reaction evidence="1">
        <text>atrochrysone carboxyl-[ACP] + H2O = atrochrysone carboxylate + holo-[ACP] + H(+)</text>
        <dbReference type="Rhea" id="RHEA:64236"/>
        <dbReference type="Rhea" id="RHEA-COMP:9685"/>
        <dbReference type="Rhea" id="RHEA-COMP:16552"/>
        <dbReference type="ChEBI" id="CHEBI:15377"/>
        <dbReference type="ChEBI" id="CHEBI:15378"/>
        <dbReference type="ChEBI" id="CHEBI:64479"/>
        <dbReference type="ChEBI" id="CHEBI:149712"/>
        <dbReference type="ChEBI" id="CHEBI:149713"/>
    </reaction>
    <physiologicalReaction direction="left-to-right" evidence="1">
        <dbReference type="Rhea" id="RHEA:64237"/>
    </physiologicalReaction>
</comment>
<comment type="cofactor">
    <cofactor evidence="2">
        <name>Zn(2+)</name>
        <dbReference type="ChEBI" id="CHEBI:29105"/>
    </cofactor>
    <text evidence="2">Binds 2 Zn(2+) ions per subunit.</text>
</comment>
<comment type="tissue specificity">
    <text evidence="10">Endocrocin is specifically produced in conidia.</text>
</comment>
<comment type="induction">
    <text evidence="7">Expression is positively regulated by the transcription factors brlA and laeA (PubMed:26242966).</text>
</comment>
<comment type="disruption phenotype">
    <text evidence="5">Abolishes the production of endocrocin (PubMed:22492455).</text>
</comment>
<comment type="biotechnology">
    <text evidence="4">Endocrocin and related anthraquinones compounds have interesting activities for medicinal uses, including anti-inflammatory activity (PubMed:20379952).</text>
</comment>
<comment type="similarity">
    <text evidence="9">Belongs to the metallo-beta-lactamase superfamily.</text>
</comment>